<proteinExistence type="evidence at protein level"/>
<accession>P0DQO8</accession>
<keyword id="KW-0165">Cleavage on pair of basic residues</keyword>
<keyword id="KW-0903">Direct protein sequencing</keyword>
<keyword id="KW-1015">Disulfide bond</keyword>
<keyword id="KW-0964">Secreted</keyword>
<keyword id="KW-0800">Toxin</keyword>
<reference key="1">
    <citation type="journal article" date="2017" name="FEBS J.">
        <title>Structural plasticity of Mini-M conotoxins: expression of all mini-M subtypes by Conus regius.</title>
        <authorList>
            <person name="Franco A."/>
            <person name="Dovell S."/>
            <person name="Moller C."/>
            <person name="Grandal M."/>
            <person name="Clark E."/>
            <person name="Mari F."/>
        </authorList>
    </citation>
    <scope>PROTEIN SEQUENCE</scope>
    <scope>MASS SPECTROMETRY</scope>
    <scope>SUBCELLULAR LOCATION</scope>
    <source>
        <tissue>Venom</tissue>
    </source>
</reference>
<dbReference type="GO" id="GO:0005576">
    <property type="term" value="C:extracellular region"/>
    <property type="evidence" value="ECO:0007669"/>
    <property type="project" value="UniProtKB-SubCell"/>
</dbReference>
<dbReference type="GO" id="GO:0090729">
    <property type="term" value="F:toxin activity"/>
    <property type="evidence" value="ECO:0007669"/>
    <property type="project" value="UniProtKB-KW"/>
</dbReference>
<name>CM3L_CONRE</name>
<evidence type="ECO:0000250" key="1">
    <source>
        <dbReference type="UniProtKB" id="Q5EHP3"/>
    </source>
</evidence>
<evidence type="ECO:0000269" key="2">
    <source>
    </source>
</evidence>
<evidence type="ECO:0000303" key="3">
    <source>
    </source>
</evidence>
<evidence type="ECO:0000305" key="4"/>
<evidence type="ECO:0000305" key="5">
    <source>
    </source>
</evidence>
<feature type="peptide" id="PRO_0000452027" description="Conotoxin reg3l" evidence="2">
    <location>
        <begin position="1"/>
        <end position="19"/>
    </location>
</feature>
<feature type="disulfide bond" evidence="1">
    <location>
        <begin position="2"/>
        <end position="16"/>
    </location>
</feature>
<feature type="disulfide bond" evidence="1">
    <location>
        <begin position="3"/>
        <end position="14"/>
    </location>
</feature>
<feature type="disulfide bond" evidence="1">
    <location>
        <begin position="8"/>
        <end position="17"/>
    </location>
</feature>
<sequence>RCCPMPGCFAGPFCPCCPV</sequence>
<comment type="subcellular location">
    <subcellularLocation>
        <location evidence="2">Secreted</location>
    </subcellularLocation>
</comment>
<comment type="tissue specificity">
    <text evidence="5">Expressed by the venom duct.</text>
</comment>
<comment type="domain">
    <text evidence="4">The cysteine framework is III (CC-C-C-CC). Classified in the M-1 branch, since 1 residue stands between the fourth and the fifth cysteine residues.</text>
</comment>
<comment type="mass spectrometry"/>
<comment type="miscellaneous">
    <text evidence="4">The precursor sequence of reg3l described in Franco et al., 2017 corresponds to the precursor of conotoxin reg12l (AC A0A2I6EDL5).</text>
</comment>
<comment type="similarity">
    <text evidence="4">Belongs to the conotoxin M superfamily.</text>
</comment>
<protein>
    <recommendedName>
        <fullName evidence="3">Conotoxin reg3l</fullName>
    </recommendedName>
</protein>
<organism>
    <name type="scientific">Conus regius</name>
    <name type="common">Crown cone</name>
    <dbReference type="NCBI Taxonomy" id="101314"/>
    <lineage>
        <taxon>Eukaryota</taxon>
        <taxon>Metazoa</taxon>
        <taxon>Spiralia</taxon>
        <taxon>Lophotrochozoa</taxon>
        <taxon>Mollusca</taxon>
        <taxon>Gastropoda</taxon>
        <taxon>Caenogastropoda</taxon>
        <taxon>Neogastropoda</taxon>
        <taxon>Conoidea</taxon>
        <taxon>Conidae</taxon>
        <taxon>Conus</taxon>
        <taxon>Stephanoconus</taxon>
    </lineage>
</organism>